<feature type="signal peptide" evidence="1">
    <location>
        <begin position="1"/>
        <end position="31"/>
    </location>
</feature>
<feature type="chain" id="PRO_0000036743" description="Transmembrane protein I329L">
    <location>
        <begin position="32"/>
        <end position="329"/>
    </location>
</feature>
<feature type="topological domain" description="Extracellular" evidence="2">
    <location>
        <begin position="32"/>
        <end position="239"/>
    </location>
</feature>
<feature type="transmembrane region" description="Helical" evidence="2">
    <location>
        <begin position="240"/>
        <end position="260"/>
    </location>
</feature>
<feature type="topological domain" description="Cytoplasmic">
    <location>
        <begin position="261"/>
        <end position="329"/>
    </location>
</feature>
<feature type="repeat" description="LRR" evidence="7">
    <location>
        <begin position="112"/>
        <end position="133"/>
    </location>
</feature>
<feature type="glycosylation site" description="N-linked (GlcNAc...) asparagine; by host" evidence="2">
    <location>
        <position position="32"/>
    </location>
</feature>
<feature type="glycosylation site" description="N-linked (GlcNAc...) asparagine; by host" evidence="2">
    <location>
        <position position="39"/>
    </location>
</feature>
<feature type="glycosylation site" description="N-linked (GlcNAc...) asparagine; by host" evidence="2">
    <location>
        <position position="44"/>
    </location>
</feature>
<feature type="glycosylation site" description="N-linked (GlcNAc...) asparagine; by host" evidence="2">
    <location>
        <position position="76"/>
    </location>
</feature>
<feature type="glycosylation site" description="N-linked (GlcNAc...) asparagine; by host" evidence="2">
    <location>
        <position position="82"/>
    </location>
</feature>
<feature type="glycosylation site" description="N-linked (GlcNAc...) asparagine; by host" evidence="2">
    <location>
        <position position="101"/>
    </location>
</feature>
<feature type="glycosylation site" description="N-linked (GlcNAc...) asparagine; by host" evidence="2">
    <location>
        <position position="185"/>
    </location>
</feature>
<feature type="glycosylation site" description="N-linked (GlcNAc...) asparagine; by host" evidence="2">
    <location>
        <position position="219"/>
    </location>
</feature>
<feature type="disulfide bond" evidence="4">
    <location>
        <begin position="195"/>
        <end position="237"/>
    </location>
</feature>
<proteinExistence type="evidence at protein level"/>
<accession>P27945</accession>
<name>I329L_ASFB7</name>
<gene>
    <name type="ordered locus">BA71V-142</name>
    <name type="ORF">I329L</name>
</gene>
<comment type="function">
    <text evidence="3 4">Viral TLR3 homolog that probably prevents TLR3 dimerization and subsequent induction of IFN (PubMed:21203785, PubMed:21280117). Inhibits dsRNA-stimulated activation of NF-kB and IRF3 (PubMed:21203785).</text>
</comment>
<comment type="subcellular location">
    <subcellularLocation>
        <location evidence="3">Host endoplasmic reticulum membrane</location>
        <topology evidence="6">Single-pass type I membrane protein</topology>
    </subcellularLocation>
    <subcellularLocation>
        <location>Host Golgi apparatus membrane</location>
        <topology evidence="6">Single-pass type I membrane protein</topology>
    </subcellularLocation>
</comment>
<comment type="induction">
    <text evidence="5">Expressed in the late phase of the viral replicative cycle.</text>
</comment>
<comment type="domain">
    <text evidence="4">Contains putative leucine-rich repeats (LRR) and a C-terminus cysteine-rich capping motif similar to domain structure of host TLR3.</text>
</comment>
<comment type="PTM">
    <text evidence="3">Highly glycosylated.</text>
</comment>
<comment type="similarity">
    <text evidence="6">Belongs to the asfivirus I329L family.</text>
</comment>
<keyword id="KW-1015">Disulfide bond</keyword>
<keyword id="KW-0325">Glycoprotein</keyword>
<keyword id="KW-1038">Host endoplasmic reticulum</keyword>
<keyword id="KW-1040">Host Golgi apparatus</keyword>
<keyword id="KW-1043">Host membrane</keyword>
<keyword id="KW-0945">Host-virus interaction</keyword>
<keyword id="KW-1090">Inhibition of host innate immune response by virus</keyword>
<keyword id="KW-1225">Inhibition of host TLR pathway by virus</keyword>
<keyword id="KW-0426">Late protein</keyword>
<keyword id="KW-0433">Leucine-rich repeat</keyword>
<keyword id="KW-0472">Membrane</keyword>
<keyword id="KW-1185">Reference proteome</keyword>
<keyword id="KW-0732">Signal</keyword>
<keyword id="KW-0812">Transmembrane</keyword>
<keyword id="KW-1133">Transmembrane helix</keyword>
<keyword id="KW-0899">Viral immunoevasion</keyword>
<evidence type="ECO:0000250" key="1">
    <source>
        <dbReference type="UniProtKB" id="A9JM73"/>
    </source>
</evidence>
<evidence type="ECO:0000255" key="2"/>
<evidence type="ECO:0000269" key="3">
    <source>
    </source>
</evidence>
<evidence type="ECO:0000269" key="4">
    <source>
    </source>
</evidence>
<evidence type="ECO:0000303" key="5">
    <source>
    </source>
</evidence>
<evidence type="ECO:0000305" key="6"/>
<evidence type="ECO:0000305" key="7">
    <source>
    </source>
</evidence>
<protein>
    <recommendedName>
        <fullName>Transmembrane protein I329L</fullName>
    </recommendedName>
</protein>
<reference key="1">
    <citation type="journal article" date="1992" name="Virology">
        <title>Genes homologous to ubiquitin-conjugating proteins and eukaryotic transcription factor SII in African swine fever virus.</title>
        <authorList>
            <person name="Rodriguez J.M."/>
            <person name="Salas M.L."/>
            <person name="Vinuela E."/>
        </authorList>
    </citation>
    <scope>NUCLEOTIDE SEQUENCE [GENOMIC DNA]</scope>
</reference>
<reference key="2">
    <citation type="journal article" date="1995" name="Virology">
        <title>Analysis of the complete nucleotide sequence of African swine fever virus.</title>
        <authorList>
            <person name="Yanez R.J."/>
            <person name="Rodriguez J.M."/>
            <person name="Nogal M.L."/>
            <person name="Yuste L."/>
            <person name="Enriquez C."/>
            <person name="Rodriguez J.F."/>
            <person name="Vinuela E."/>
        </authorList>
    </citation>
    <scope>NUCLEOTIDE SEQUENCE [LARGE SCALE GENOMIC DNA]</scope>
</reference>
<reference key="3">
    <citation type="journal article" date="2011" name="Arch. Virol.">
        <title>A novel TLR3 inhibitor encoded by African swine fever virus (ASFV).</title>
        <authorList>
            <person name="de Oliveira V.L."/>
            <person name="Almeida S.C."/>
            <person name="Soares H.R."/>
            <person name="Crespo A."/>
            <person name="Marshall-Clarke S."/>
            <person name="Parkhouse R.M."/>
        </authorList>
    </citation>
    <scope>GLYCOSYLATION</scope>
    <scope>SUBCELLULAR LOCATION</scope>
    <scope>FUNCTION</scope>
</reference>
<reference key="4">
    <citation type="journal article" date="2011" name="Protein Sci.">
        <title>Modeling of the Toll-like receptor 3 and a putative Toll-like receptor 3 antagonist encoded by the African swine fever virus.</title>
        <authorList>
            <person name="Henriques E.S."/>
            <person name="Brito R.M."/>
            <person name="Soares H."/>
            <person name="Ventura S."/>
            <person name="de Oliveira V.L."/>
            <person name="Parkhouse R.M."/>
        </authorList>
    </citation>
    <scope>FUNCTION</scope>
    <scope>DOMAIN</scope>
</reference>
<reference key="5">
    <citation type="journal article" date="2013" name="Virus Res.">
        <title>African swine fever virus transcription.</title>
        <authorList>
            <person name="Rodriguez J.M."/>
            <person name="Salas M.L."/>
        </authorList>
    </citation>
    <scope>REVIEW</scope>
</reference>
<sequence>MLRVFIFFVFLGSGLTGRIKPQVTCKYFISENNTWYKYNVTILNSSIILPAYNTIPSNAAGISCTCHDIDYLQKNNISIHYNTSILKTFQDIRIIRCGMKNISEIAGGFGKELKFLDLRYNDLQVIDYNILRKLIRSNTPTYLYYNNLMCGKRNCPLYYFLLKQEQTYLKRLPQFFLRRISFSNNNTYLYHFLSCGNKPGHEFLEYQTKYCRTKFPEINITVNQLIAKKNTERYKSCYPLVFISILCSCISFLFLFICLLRSICKKYSCTKQDKSSHNYIPLIPSYTFSLKKHRHPETAVVEDHTTSANSPIVYIPTTEEKKVSCSRRK</sequence>
<organismHost>
    <name type="scientific">Ornithodoros</name>
    <name type="common">relapsing fever ticks</name>
    <dbReference type="NCBI Taxonomy" id="6937"/>
</organismHost>
<organismHost>
    <name type="scientific">Sus scrofa</name>
    <name type="common">Pig</name>
    <dbReference type="NCBI Taxonomy" id="9823"/>
</organismHost>
<organism>
    <name type="scientific">African swine fever virus (strain Badajoz 1971 Vero-adapted)</name>
    <name type="common">Ba71V</name>
    <name type="synonym">ASFV</name>
    <dbReference type="NCBI Taxonomy" id="10498"/>
    <lineage>
        <taxon>Viruses</taxon>
        <taxon>Varidnaviria</taxon>
        <taxon>Bamfordvirae</taxon>
        <taxon>Nucleocytoviricota</taxon>
        <taxon>Pokkesviricetes</taxon>
        <taxon>Asfuvirales</taxon>
        <taxon>Asfarviridae</taxon>
        <taxon>Asfivirus</taxon>
        <taxon>African swine fever virus</taxon>
    </lineage>
</organism>
<dbReference type="EMBL" id="M77121">
    <property type="protein sequence ID" value="AAA42702.1"/>
    <property type="molecule type" value="Genomic_DNA"/>
</dbReference>
<dbReference type="EMBL" id="U18466">
    <property type="protein sequence ID" value="AAA65369.1"/>
    <property type="molecule type" value="Genomic_DNA"/>
</dbReference>
<dbReference type="PIR" id="D39448">
    <property type="entry name" value="WMXFB4"/>
</dbReference>
<dbReference type="RefSeq" id="NP_042833.1">
    <property type="nucleotide sequence ID" value="NC_001659.2"/>
</dbReference>
<dbReference type="GeneID" id="22220369"/>
<dbReference type="KEGG" id="vg:22220369"/>
<dbReference type="Proteomes" id="UP000000624">
    <property type="component" value="Segment"/>
</dbReference>
<dbReference type="GO" id="GO:0044167">
    <property type="term" value="C:host cell endoplasmic reticulum membrane"/>
    <property type="evidence" value="ECO:0007669"/>
    <property type="project" value="UniProtKB-SubCell"/>
</dbReference>
<dbReference type="GO" id="GO:0044178">
    <property type="term" value="C:host cell Golgi membrane"/>
    <property type="evidence" value="ECO:0007669"/>
    <property type="project" value="UniProtKB-SubCell"/>
</dbReference>
<dbReference type="GO" id="GO:0016020">
    <property type="term" value="C:membrane"/>
    <property type="evidence" value="ECO:0007669"/>
    <property type="project" value="UniProtKB-KW"/>
</dbReference>
<dbReference type="GO" id="GO:0052170">
    <property type="term" value="P:symbiont-mediated suppression of host innate immune response"/>
    <property type="evidence" value="ECO:0007669"/>
    <property type="project" value="UniProtKB-KW"/>
</dbReference>
<dbReference type="GO" id="GO:0039722">
    <property type="term" value="P:symbiont-mediated suppression of host toll-like receptor signaling pathway"/>
    <property type="evidence" value="ECO:0000269"/>
    <property type="project" value="SigSci"/>
</dbReference>
<dbReference type="Gene3D" id="3.80.10.10">
    <property type="entry name" value="Ribonuclease Inhibitor"/>
    <property type="match status" value="1"/>
</dbReference>
<dbReference type="InterPro" id="IPR032675">
    <property type="entry name" value="LRR_dom_sf"/>
</dbReference>